<reference key="1">
    <citation type="journal article" date="2009" name="Proc. Natl. Acad. Sci. U.S.A.">
        <title>Eukaryote-to-eukaryote gene transfer events revealed by the genome sequence of the wine yeast Saccharomyces cerevisiae EC1118.</title>
        <authorList>
            <person name="Novo M."/>
            <person name="Bigey F."/>
            <person name="Beyne E."/>
            <person name="Galeote V."/>
            <person name="Gavory F."/>
            <person name="Mallet S."/>
            <person name="Cambon B."/>
            <person name="Legras J.-L."/>
            <person name="Wincker P."/>
            <person name="Casaregola S."/>
            <person name="Dequin S."/>
        </authorList>
    </citation>
    <scope>NUCLEOTIDE SEQUENCE [LARGE SCALE GENOMIC DNA]</scope>
    <source>
        <strain>Lalvin EC1118 / Prise de mousse</strain>
    </source>
</reference>
<evidence type="ECO:0000250" key="1"/>
<evidence type="ECO:0000250" key="2">
    <source>
        <dbReference type="UniProtKB" id="P09620"/>
    </source>
</evidence>
<evidence type="ECO:0000255" key="3"/>
<evidence type="ECO:0000256" key="4">
    <source>
        <dbReference type="SAM" id="MobiDB-lite"/>
    </source>
</evidence>
<evidence type="ECO:0000305" key="5"/>
<keyword id="KW-0053">Apoptosis</keyword>
<keyword id="KW-0121">Carboxypeptidase</keyword>
<keyword id="KW-0325">Glycoprotein</keyword>
<keyword id="KW-0333">Golgi apparatus</keyword>
<keyword id="KW-0378">Hydrolase</keyword>
<keyword id="KW-0472">Membrane</keyword>
<keyword id="KW-0597">Phosphoprotein</keyword>
<keyword id="KW-0645">Protease</keyword>
<keyword id="KW-0732">Signal</keyword>
<keyword id="KW-0812">Transmembrane</keyword>
<keyword id="KW-1133">Transmembrane helix</keyword>
<sequence>MFYNRWLGTWLAMSALIRISVSLPSSEEYKVAYELLPGLSEVPDPSNIPQMHAGHIPLRSEDADEQDSSDLEYFFWKFTNNDSNGNVDRPLIIWLNGGPGCSSMDGALVESGPFRVNSDGKLYLNEGSWISKGDLLFIDQPTGTGFSVEQNKDEGKIDKNKFDEDLEDVTKHFMDFLENYFKIFPEDLTRKIILSGESYAGQYIPFFANAILNHNKFSKIDGDTYDLKALLIGNGWIDPNTQSLSYLPFAMEKKLIDESNPNFKHLTNAHENCQNLINSASTDEAAHFSYQECENILNLLLSYTRESSQKGTADCLNMYNFNLKDSYPSCGMNWPKDVSFVSKFFSTPGVIDSLHLDSDKIDHWKECTNSVGTKLSNPISKPSIHLLPGLLESGIEIVLFNGDKDLICNNKGVLDTIDNLKWGGIKGFSDDAVSFDWIHKSKSTDDSEEFSGYVKYDRNLTFVSVYNASHMVPFDKSLVSRGIVDIYSNDVMIIDNNGKNVMITTDDDSDQDATTESGDKPKENLEEEEQEAQNEEGKEKEGNKDKDGDDDNDNDDDDEDDHNSEGDDDDDDDDDDDDDDDDDEDDNNEKQSNQGLEDSRHKSSEYEQEEEEVEEFAEEISMYKHKAVVVTIVTFLIVVLGVYAYDRRVRRKARHTILVDPNNRQHDSPNKTVSWADDLESGLGAEDDLEQDEQLEGGAPISSTSNKAGSKLKTKKKKKYTSLPNTEIDESFEMTDF</sequence>
<accession>C8Z852</accession>
<organism>
    <name type="scientific">Saccharomyces cerevisiae (strain Lalvin EC1118 / Prise de mousse)</name>
    <name type="common">Baker's yeast</name>
    <dbReference type="NCBI Taxonomy" id="643680"/>
    <lineage>
        <taxon>Eukaryota</taxon>
        <taxon>Fungi</taxon>
        <taxon>Dikarya</taxon>
        <taxon>Ascomycota</taxon>
        <taxon>Saccharomycotina</taxon>
        <taxon>Saccharomycetes</taxon>
        <taxon>Saccharomycetales</taxon>
        <taxon>Saccharomycetaceae</taxon>
        <taxon>Saccharomyces</taxon>
    </lineage>
</organism>
<dbReference type="EC" id="3.4.16.6"/>
<dbReference type="EMBL" id="FN393070">
    <property type="protein sequence ID" value="CAY79568.1"/>
    <property type="molecule type" value="Genomic_DNA"/>
</dbReference>
<dbReference type="SMR" id="C8Z852"/>
<dbReference type="ESTHER" id="yeast-kex01">
    <property type="family name" value="Carboxypeptidase_S10"/>
</dbReference>
<dbReference type="GlyCosmos" id="C8Z852">
    <property type="glycosylation" value="3 sites, No reported glycans"/>
</dbReference>
<dbReference type="HOGENOM" id="CLU_008523_11_2_1"/>
<dbReference type="OrthoDB" id="41355at4893"/>
<dbReference type="Proteomes" id="UP000000286">
    <property type="component" value="Chromosome VII, Scaffold EC1118_1G1"/>
</dbReference>
<dbReference type="GO" id="GO:0016020">
    <property type="term" value="C:membrane"/>
    <property type="evidence" value="ECO:0007669"/>
    <property type="project" value="UniProtKB-KW"/>
</dbReference>
<dbReference type="GO" id="GO:0005802">
    <property type="term" value="C:trans-Golgi network"/>
    <property type="evidence" value="ECO:0007669"/>
    <property type="project" value="TreeGrafter"/>
</dbReference>
<dbReference type="GO" id="GO:0004185">
    <property type="term" value="F:serine-type carboxypeptidase activity"/>
    <property type="evidence" value="ECO:0007669"/>
    <property type="project" value="UniProtKB-EC"/>
</dbReference>
<dbReference type="GO" id="GO:0006915">
    <property type="term" value="P:apoptotic process"/>
    <property type="evidence" value="ECO:0007669"/>
    <property type="project" value="UniProtKB-KW"/>
</dbReference>
<dbReference type="GO" id="GO:0006508">
    <property type="term" value="P:proteolysis"/>
    <property type="evidence" value="ECO:0007669"/>
    <property type="project" value="UniProtKB-KW"/>
</dbReference>
<dbReference type="FunFam" id="3.40.50.1820:FF:000289">
    <property type="entry name" value="Pheromone-processing carboxypeptidase KEX1"/>
    <property type="match status" value="1"/>
</dbReference>
<dbReference type="Gene3D" id="3.40.50.1820">
    <property type="entry name" value="alpha/beta hydrolase"/>
    <property type="match status" value="1"/>
</dbReference>
<dbReference type="InterPro" id="IPR029058">
    <property type="entry name" value="AB_hydrolase_fold"/>
</dbReference>
<dbReference type="InterPro" id="IPR001563">
    <property type="entry name" value="Peptidase_S10"/>
</dbReference>
<dbReference type="InterPro" id="IPR033124">
    <property type="entry name" value="Ser_caboxypep_his_AS"/>
</dbReference>
<dbReference type="InterPro" id="IPR018202">
    <property type="entry name" value="Ser_caboxypep_ser_AS"/>
</dbReference>
<dbReference type="PANTHER" id="PTHR11802:SF190">
    <property type="entry name" value="PHEROMONE-PROCESSING CARBOXYPEPTIDASE KEX1"/>
    <property type="match status" value="1"/>
</dbReference>
<dbReference type="PANTHER" id="PTHR11802">
    <property type="entry name" value="SERINE PROTEASE FAMILY S10 SERINE CARBOXYPEPTIDASE"/>
    <property type="match status" value="1"/>
</dbReference>
<dbReference type="Pfam" id="PF00450">
    <property type="entry name" value="Peptidase_S10"/>
    <property type="match status" value="1"/>
</dbReference>
<dbReference type="PRINTS" id="PR00724">
    <property type="entry name" value="CRBOXYPTASEC"/>
</dbReference>
<dbReference type="SUPFAM" id="SSF53474">
    <property type="entry name" value="alpha/beta-Hydrolases"/>
    <property type="match status" value="1"/>
</dbReference>
<dbReference type="PROSITE" id="PS00560">
    <property type="entry name" value="CARBOXYPEPT_SER_HIS"/>
    <property type="match status" value="1"/>
</dbReference>
<dbReference type="PROSITE" id="PS00131">
    <property type="entry name" value="CARBOXYPEPT_SER_SER"/>
    <property type="match status" value="1"/>
</dbReference>
<proteinExistence type="inferred from homology"/>
<feature type="signal peptide" evidence="3">
    <location>
        <begin position="1"/>
        <end position="22"/>
    </location>
</feature>
<feature type="chain" id="PRO_0000411955" description="Pheromone-processing carboxypeptidase KEX1">
    <location>
        <begin position="23"/>
        <end position="737"/>
    </location>
</feature>
<feature type="topological domain" description="Lumenal" evidence="3">
    <location>
        <begin position="23"/>
        <end position="624"/>
    </location>
</feature>
<feature type="transmembrane region" description="Helical" evidence="3">
    <location>
        <begin position="625"/>
        <end position="645"/>
    </location>
</feature>
<feature type="topological domain" description="Cytoplasmic" evidence="3">
    <location>
        <begin position="646"/>
        <end position="737"/>
    </location>
</feature>
<feature type="region of interest" description="Disordered" evidence="4">
    <location>
        <begin position="502"/>
        <end position="611"/>
    </location>
</feature>
<feature type="region of interest" description="Disordered" evidence="4">
    <location>
        <begin position="682"/>
        <end position="737"/>
    </location>
</feature>
<feature type="compositionally biased region" description="Acidic residues" evidence="4">
    <location>
        <begin position="525"/>
        <end position="534"/>
    </location>
</feature>
<feature type="compositionally biased region" description="Basic and acidic residues" evidence="4">
    <location>
        <begin position="535"/>
        <end position="547"/>
    </location>
</feature>
<feature type="compositionally biased region" description="Acidic residues" evidence="4">
    <location>
        <begin position="548"/>
        <end position="587"/>
    </location>
</feature>
<feature type="compositionally biased region" description="Acidic residues" evidence="4">
    <location>
        <begin position="682"/>
        <end position="695"/>
    </location>
</feature>
<feature type="compositionally biased region" description="Basic residues" evidence="4">
    <location>
        <begin position="710"/>
        <end position="720"/>
    </location>
</feature>
<feature type="compositionally biased region" description="Acidic residues" evidence="4">
    <location>
        <begin position="727"/>
        <end position="737"/>
    </location>
</feature>
<feature type="active site" evidence="1">
    <location>
        <position position="198"/>
    </location>
</feature>
<feature type="active site" evidence="1">
    <location>
        <position position="405"/>
    </location>
</feature>
<feature type="active site" evidence="1">
    <location>
        <position position="470"/>
    </location>
</feature>
<feature type="modified residue" description="Phosphoserine" evidence="2">
    <location>
        <position position="668"/>
    </location>
</feature>
<feature type="glycosylation site" description="N-linked (GlcNAc...) asparagine" evidence="3">
    <location>
        <position position="81"/>
    </location>
</feature>
<feature type="glycosylation site" description="N-linked (GlcNAc...) asparagine" evidence="3">
    <location>
        <position position="459"/>
    </location>
</feature>
<feature type="glycosylation site" description="N-linked (GlcNAc...) asparagine" evidence="3">
    <location>
        <position position="467"/>
    </location>
</feature>
<name>KEX1_YEAS8</name>
<protein>
    <recommendedName>
        <fullName>Pheromone-processing carboxypeptidase KEX1</fullName>
        <ecNumber>3.4.16.6</ecNumber>
    </recommendedName>
    <alternativeName>
        <fullName>Carboxypeptidase D</fullName>
    </alternativeName>
    <alternativeName>
        <fullName>Killer expression defective protein 1</fullName>
    </alternativeName>
</protein>
<gene>
    <name type="primary">KEX1</name>
    <name type="ORF">EC1118_1G1_0705g</name>
</gene>
<comment type="function">
    <text evidence="1">Protease with a carboxypeptidase B-like function involved in the C-terminal processing of the lysine and arginine residues from the precursors of K1, K2 and K28 killer toxins and a-factor (mating pheromone). Involved in the programmed cell death caused by defective N-glycosylation and also contributes to the active cell death program induced by acetic acid stress or during chronological aging. Promotes cell fusion by proteolytically processing substrates that act in parallel to PRM1 as an alternative fusion machine, as cell wall components, or both (By similarity).</text>
</comment>
<comment type="catalytic activity">
    <reaction>
        <text>Preferential release of a C-terminal arginine or lysine residue.</text>
        <dbReference type="EC" id="3.4.16.6"/>
    </reaction>
</comment>
<comment type="subcellular location">
    <subcellularLocation>
        <location evidence="1">Golgi apparatus</location>
        <location evidence="1">trans-Golgi network membrane</location>
        <topology evidence="1">Single-pass type I membrane protein</topology>
    </subcellularLocation>
</comment>
<comment type="similarity">
    <text evidence="5">Belongs to the peptidase S10 family.</text>
</comment>